<protein>
    <recommendedName>
        <fullName evidence="1">LexA repressor</fullName>
        <ecNumber evidence="1">3.4.21.88</ecNumber>
    </recommendedName>
</protein>
<name>LEXA_MYCBO</name>
<organism>
    <name type="scientific">Mycobacterium bovis (strain ATCC BAA-935 / AF2122/97)</name>
    <dbReference type="NCBI Taxonomy" id="233413"/>
    <lineage>
        <taxon>Bacteria</taxon>
        <taxon>Bacillati</taxon>
        <taxon>Actinomycetota</taxon>
        <taxon>Actinomycetes</taxon>
        <taxon>Mycobacteriales</taxon>
        <taxon>Mycobacteriaceae</taxon>
        <taxon>Mycobacterium</taxon>
        <taxon>Mycobacterium tuberculosis complex</taxon>
    </lineage>
</organism>
<accession>Q7TY15</accession>
<accession>A0A1R3Y266</accession>
<accession>X2BLP2</accession>
<keyword id="KW-0068">Autocatalytic cleavage</keyword>
<keyword id="KW-0227">DNA damage</keyword>
<keyword id="KW-0234">DNA repair</keyword>
<keyword id="KW-0235">DNA replication</keyword>
<keyword id="KW-0238">DNA-binding</keyword>
<keyword id="KW-0378">Hydrolase</keyword>
<keyword id="KW-1185">Reference proteome</keyword>
<keyword id="KW-0678">Repressor</keyword>
<keyword id="KW-0742">SOS response</keyword>
<keyword id="KW-0804">Transcription</keyword>
<keyword id="KW-0805">Transcription regulation</keyword>
<sequence length="236" mass="24813">MNDSNDTSVAGGAAGADSRVLSADSALTERQRTILDVIRASVTSRGYPPSIREIGDAVGLTSTSSVAHQLRTLERKGYLRRDPNRPRAVNVRGADDAALPPVTEVAGSDALPEPTFAPVLGRIAAGGPILAEEAVEDVFPLPRELVGEGTLFLLKVIGDSMVEAAICDGDWVVVRQQNVADNGDIVAAMIDGEATVKTFKRAGGQVWLMPHNPAFDPIPGNDATVLGKVVTVIRKV</sequence>
<evidence type="ECO:0000255" key="1">
    <source>
        <dbReference type="HAMAP-Rule" id="MF_00015"/>
    </source>
</evidence>
<evidence type="ECO:0000256" key="2">
    <source>
        <dbReference type="SAM" id="MobiDB-lite"/>
    </source>
</evidence>
<evidence type="ECO:0000305" key="3"/>
<feature type="chain" id="PRO_0000170056" description="LexA repressor">
    <location>
        <begin position="1"/>
        <end position="236"/>
    </location>
</feature>
<feature type="DNA-binding region" description="H-T-H motif" evidence="1">
    <location>
        <begin position="51"/>
        <end position="71"/>
    </location>
</feature>
<feature type="region of interest" description="Disordered" evidence="2">
    <location>
        <begin position="1"/>
        <end position="25"/>
    </location>
</feature>
<feature type="active site" description="For autocatalytic cleavage activity" evidence="1">
    <location>
        <position position="160"/>
    </location>
</feature>
<feature type="active site" description="For autocatalytic cleavage activity" evidence="1">
    <location>
        <position position="197"/>
    </location>
</feature>
<feature type="site" description="Cleavage; by autolysis" evidence="1">
    <location>
        <begin position="125"/>
        <end position="126"/>
    </location>
</feature>
<comment type="function">
    <text evidence="1">Represses a number of genes involved in the response to DNA damage (SOS response), including recA and lexA. In the presence of single-stranded DNA, RecA interacts with LexA causing an autocatalytic cleavage which disrupts the DNA-binding part of LexA, leading to derepression of the SOS regulon and eventually DNA repair.</text>
</comment>
<comment type="catalytic activity">
    <reaction evidence="1">
        <text>Hydrolysis of Ala-|-Gly bond in repressor LexA.</text>
        <dbReference type="EC" id="3.4.21.88"/>
    </reaction>
</comment>
<comment type="subunit">
    <text evidence="1">Homodimer.</text>
</comment>
<comment type="similarity">
    <text evidence="1">Belongs to the peptidase S24 family.</text>
</comment>
<comment type="sequence caution" evidence="3">
    <conflict type="erroneous initiation">
        <sequence resource="EMBL-CDS" id="SIU01357"/>
    </conflict>
    <text>Truncated N-terminus.</text>
</comment>
<proteinExistence type="inferred from homology"/>
<gene>
    <name evidence="1" type="primary">lexA</name>
    <name type="ordered locus">BQ2027_MB2739</name>
</gene>
<dbReference type="EC" id="3.4.21.88" evidence="1"/>
<dbReference type="EMBL" id="LT708304">
    <property type="protein sequence ID" value="SIU01357.1"/>
    <property type="status" value="ALT_INIT"/>
    <property type="molecule type" value="Genomic_DNA"/>
</dbReference>
<dbReference type="RefSeq" id="NP_856385.1">
    <property type="nucleotide sequence ID" value="NC_002945.3"/>
</dbReference>
<dbReference type="RefSeq" id="WP_019283510.1">
    <property type="nucleotide sequence ID" value="NC_002945.4"/>
</dbReference>
<dbReference type="SMR" id="Q7TY15"/>
<dbReference type="MEROPS" id="S24.001"/>
<dbReference type="KEGG" id="mbo:BQ2027_MB2739"/>
<dbReference type="PATRIC" id="fig|233413.5.peg.3002"/>
<dbReference type="Proteomes" id="UP000001419">
    <property type="component" value="Chromosome"/>
</dbReference>
<dbReference type="GO" id="GO:0003677">
    <property type="term" value="F:DNA binding"/>
    <property type="evidence" value="ECO:0007669"/>
    <property type="project" value="UniProtKB-UniRule"/>
</dbReference>
<dbReference type="GO" id="GO:0004252">
    <property type="term" value="F:serine-type endopeptidase activity"/>
    <property type="evidence" value="ECO:0007669"/>
    <property type="project" value="UniProtKB-UniRule"/>
</dbReference>
<dbReference type="GO" id="GO:0006281">
    <property type="term" value="P:DNA repair"/>
    <property type="evidence" value="ECO:0007669"/>
    <property type="project" value="UniProtKB-UniRule"/>
</dbReference>
<dbReference type="GO" id="GO:0006260">
    <property type="term" value="P:DNA replication"/>
    <property type="evidence" value="ECO:0007669"/>
    <property type="project" value="UniProtKB-UniRule"/>
</dbReference>
<dbReference type="GO" id="GO:0045892">
    <property type="term" value="P:negative regulation of DNA-templated transcription"/>
    <property type="evidence" value="ECO:0007669"/>
    <property type="project" value="UniProtKB-UniRule"/>
</dbReference>
<dbReference type="GO" id="GO:0006508">
    <property type="term" value="P:proteolysis"/>
    <property type="evidence" value="ECO:0007669"/>
    <property type="project" value="InterPro"/>
</dbReference>
<dbReference type="GO" id="GO:0009432">
    <property type="term" value="P:SOS response"/>
    <property type="evidence" value="ECO:0007669"/>
    <property type="project" value="UniProtKB-UniRule"/>
</dbReference>
<dbReference type="CDD" id="cd06529">
    <property type="entry name" value="S24_LexA-like"/>
    <property type="match status" value="1"/>
</dbReference>
<dbReference type="FunFam" id="1.10.10.10:FF:000009">
    <property type="entry name" value="LexA repressor"/>
    <property type="match status" value="1"/>
</dbReference>
<dbReference type="FunFam" id="2.10.109.10:FF:000001">
    <property type="entry name" value="LexA repressor"/>
    <property type="match status" value="1"/>
</dbReference>
<dbReference type="Gene3D" id="2.10.109.10">
    <property type="entry name" value="Umud Fragment, subunit A"/>
    <property type="match status" value="1"/>
</dbReference>
<dbReference type="Gene3D" id="1.10.10.10">
    <property type="entry name" value="Winged helix-like DNA-binding domain superfamily/Winged helix DNA-binding domain"/>
    <property type="match status" value="1"/>
</dbReference>
<dbReference type="HAMAP" id="MF_00015">
    <property type="entry name" value="LexA"/>
    <property type="match status" value="1"/>
</dbReference>
<dbReference type="InterPro" id="IPR006200">
    <property type="entry name" value="LexA"/>
</dbReference>
<dbReference type="InterPro" id="IPR039418">
    <property type="entry name" value="LexA-like"/>
</dbReference>
<dbReference type="InterPro" id="IPR036286">
    <property type="entry name" value="LexA/Signal_pep-like_sf"/>
</dbReference>
<dbReference type="InterPro" id="IPR006199">
    <property type="entry name" value="LexA_DNA-bd_dom"/>
</dbReference>
<dbReference type="InterPro" id="IPR050077">
    <property type="entry name" value="LexA_repressor"/>
</dbReference>
<dbReference type="InterPro" id="IPR006197">
    <property type="entry name" value="Peptidase_S24_LexA"/>
</dbReference>
<dbReference type="InterPro" id="IPR015927">
    <property type="entry name" value="Peptidase_S24_S26A/B/C"/>
</dbReference>
<dbReference type="InterPro" id="IPR036388">
    <property type="entry name" value="WH-like_DNA-bd_sf"/>
</dbReference>
<dbReference type="InterPro" id="IPR036390">
    <property type="entry name" value="WH_DNA-bd_sf"/>
</dbReference>
<dbReference type="NCBIfam" id="TIGR00498">
    <property type="entry name" value="lexA"/>
    <property type="match status" value="1"/>
</dbReference>
<dbReference type="PANTHER" id="PTHR33516">
    <property type="entry name" value="LEXA REPRESSOR"/>
    <property type="match status" value="1"/>
</dbReference>
<dbReference type="PANTHER" id="PTHR33516:SF2">
    <property type="entry name" value="LEXA REPRESSOR-RELATED"/>
    <property type="match status" value="1"/>
</dbReference>
<dbReference type="Pfam" id="PF01726">
    <property type="entry name" value="LexA_DNA_bind"/>
    <property type="match status" value="1"/>
</dbReference>
<dbReference type="Pfam" id="PF00717">
    <property type="entry name" value="Peptidase_S24"/>
    <property type="match status" value="1"/>
</dbReference>
<dbReference type="PRINTS" id="PR00726">
    <property type="entry name" value="LEXASERPTASE"/>
</dbReference>
<dbReference type="SUPFAM" id="SSF51306">
    <property type="entry name" value="LexA/Signal peptidase"/>
    <property type="match status" value="1"/>
</dbReference>
<dbReference type="SUPFAM" id="SSF46785">
    <property type="entry name" value="Winged helix' DNA-binding domain"/>
    <property type="match status" value="1"/>
</dbReference>
<reference key="1">
    <citation type="journal article" date="2003" name="Proc. Natl. Acad. Sci. U.S.A.">
        <title>The complete genome sequence of Mycobacterium bovis.</title>
        <authorList>
            <person name="Garnier T."/>
            <person name="Eiglmeier K."/>
            <person name="Camus J.-C."/>
            <person name="Medina N."/>
            <person name="Mansoor H."/>
            <person name="Pryor M."/>
            <person name="Duthoy S."/>
            <person name="Grondin S."/>
            <person name="Lacroix C."/>
            <person name="Monsempe C."/>
            <person name="Simon S."/>
            <person name="Harris B."/>
            <person name="Atkin R."/>
            <person name="Doggett J."/>
            <person name="Mayes R."/>
            <person name="Keating L."/>
            <person name="Wheeler P.R."/>
            <person name="Parkhill J."/>
            <person name="Barrell B.G."/>
            <person name="Cole S.T."/>
            <person name="Gordon S.V."/>
            <person name="Hewinson R.G."/>
        </authorList>
    </citation>
    <scope>NUCLEOTIDE SEQUENCE [LARGE SCALE GENOMIC DNA]</scope>
    <source>
        <strain>ATCC BAA-935 / AF2122/97</strain>
    </source>
</reference>
<reference key="2">
    <citation type="journal article" date="2017" name="Genome Announc.">
        <title>Updated reference genome sequence and annotation of Mycobacterium bovis AF2122/97.</title>
        <authorList>
            <person name="Malone K.M."/>
            <person name="Farrell D."/>
            <person name="Stuber T.P."/>
            <person name="Schubert O.T."/>
            <person name="Aebersold R."/>
            <person name="Robbe-Austerman S."/>
            <person name="Gordon S.V."/>
        </authorList>
    </citation>
    <scope>NUCLEOTIDE SEQUENCE [LARGE SCALE GENOMIC DNA]</scope>
    <scope>GENOME REANNOTATION</scope>
    <source>
        <strain>ATCC BAA-935 / AF2122/97</strain>
    </source>
</reference>